<feature type="chain" id="PRO_0000222119" description="Uncharacterized protein ORF37">
    <location>
        <begin position="1"/>
        <end position="670"/>
    </location>
</feature>
<sequence length="670" mass="75416">MSGVKLGSFALSISYTCVFVNLRRKKPIMAMYRLGHQQQHVPNTDISIFRDKVPYTPTVDDAALNKLIMIIRETYGLPKYTIRLISGTTFWAVIKNIYDNDRVFGNTTSEMMNGLDLVYAIDDFCTKQLLEMFPEHVTDMQHLAGAMSKSLGRTGFYRHLTETFKRHMLWSVLTNFSPVAYYPAADIARADEACDLVTRATVDRLRKTEETVLADERFRGLLGPEMVARLLKVIPGIPPDTARSIGLVFDNIRPKLSTEAARTLGGMLIETLRRQYSGYLPVAPLVDLTETVMVYVHEVDTCLLMDKRGRVFRALGEPISRSQPLSSPVARTSESTMKFQALFDDYMRAASMNAKRTVVTAPQTVAAQESRNPFTRELDSGQLSRATFENLIQLTGQLNYHQRTAIAESSGLVANPTMVSPTNTALAHMLRTNGAAIQESMLDDLNSRINDLTDQSRRFTDLKRVIGLLQSRDFETLAVHVGELHPDDRELVLHALGPSTRSAAQIDPPEIHRLPENTKLLCSFTTSINLPEIEELLHLWTITWETVFCGRNLFTRRKHALQYTTTGRHDNEPSQSIQFMFVDSLNAPGVLMDRLYPSKVTKLTFTELMVLSEKVETVTLPEIFAAQIGLNPSEVRLKNRDACEPPREIVTGVNHELGVDGRFRVAMEDV</sequence>
<organism>
    <name type="scientific">Ictalurid herpesvirus 1 (strain Auburn)</name>
    <name type="common">IcHV-1</name>
    <name type="synonym">Channel catfish herpesvirus</name>
    <dbReference type="NCBI Taxonomy" id="766178"/>
    <lineage>
        <taxon>Viruses</taxon>
        <taxon>Duplodnaviria</taxon>
        <taxon>Heunggongvirae</taxon>
        <taxon>Peploviricota</taxon>
        <taxon>Herviviricetes</taxon>
        <taxon>Herpesvirales</taxon>
        <taxon>Alloherpesviridae</taxon>
        <taxon>Ictavirus</taxon>
        <taxon>Ictavirus ictaluridallo1</taxon>
        <taxon>Ictalurid herpesvirus 1</taxon>
    </lineage>
</organism>
<dbReference type="EMBL" id="M75136">
    <property type="protein sequence ID" value="AAA88140.1"/>
    <property type="molecule type" value="Genomic_DNA"/>
</dbReference>
<dbReference type="PIR" id="B36790">
    <property type="entry name" value="B36790"/>
</dbReference>
<dbReference type="RefSeq" id="NP_041128.1">
    <property type="nucleotide sequence ID" value="NC_001493.2"/>
</dbReference>
<dbReference type="GeneID" id="1488431"/>
<dbReference type="KEGG" id="vg:1488431"/>
<dbReference type="Proteomes" id="UP000007643">
    <property type="component" value="Segment"/>
</dbReference>
<keyword id="KW-1185">Reference proteome</keyword>
<organismHost>
    <name type="scientific">Ictaluridae</name>
    <name type="common">bullhead catfishes</name>
    <dbReference type="NCBI Taxonomy" id="7996"/>
</organismHost>
<gene>
    <name type="primary">ORF37</name>
</gene>
<name>VG37_ICHVA</name>
<accession>Q00160</accession>
<protein>
    <recommendedName>
        <fullName>Uncharacterized protein ORF37</fullName>
    </recommendedName>
</protein>
<reference key="1">
    <citation type="journal article" date="1992" name="Virology">
        <title>Channel catfish virus: a new type of herpesvirus.</title>
        <authorList>
            <person name="Davison A.J."/>
        </authorList>
    </citation>
    <scope>NUCLEOTIDE SEQUENCE [LARGE SCALE GENOMIC DNA]</scope>
</reference>
<proteinExistence type="predicted"/>